<dbReference type="EC" id="3.1.4.-"/>
<dbReference type="EMBL" id="AL032652">
    <property type="protein sequence ID" value="CAA21707.1"/>
    <property type="molecule type" value="Genomic_DNA"/>
</dbReference>
<dbReference type="PIR" id="T27272">
    <property type="entry name" value="T27272"/>
</dbReference>
<dbReference type="PDB" id="4F1I">
    <property type="method" value="X-ray"/>
    <property type="resolution" value="2.50 A"/>
    <property type="chains" value="A=21-362"/>
</dbReference>
<dbReference type="PDB" id="4FVA">
    <property type="method" value="X-ray"/>
    <property type="resolution" value="2.07 A"/>
    <property type="chains" value="A/B/C/D=107-362"/>
</dbReference>
<dbReference type="PDB" id="4GEW">
    <property type="method" value="X-ray"/>
    <property type="resolution" value="2.35 A"/>
    <property type="chains" value="A=1-362"/>
</dbReference>
<dbReference type="PDBsum" id="4F1I"/>
<dbReference type="PDBsum" id="4FVA"/>
<dbReference type="PDBsum" id="4GEW"/>
<dbReference type="SMR" id="Q9XWG3"/>
<dbReference type="BioGRID" id="38665">
    <property type="interactions" value="27"/>
</dbReference>
<dbReference type="DIP" id="DIP-25336N"/>
<dbReference type="FunCoup" id="Q9XWG3">
    <property type="interactions" value="2022"/>
</dbReference>
<dbReference type="IntAct" id="Q9XWG3">
    <property type="interactions" value="12"/>
</dbReference>
<dbReference type="STRING" id="6239.Y63D3A.4.1"/>
<dbReference type="PaxDb" id="6239-Y63D3A.4"/>
<dbReference type="PeptideAtlas" id="Q9XWG3"/>
<dbReference type="EnsemblMetazoa" id="Y63D3A.4.1">
    <property type="protein sequence ID" value="Y63D3A.4.1"/>
    <property type="gene ID" value="WBGene00013405"/>
</dbReference>
<dbReference type="KEGG" id="cel:CELE_Y63D3A.4"/>
<dbReference type="UCSC" id="Y63D3A.4">
    <property type="organism name" value="c. elegans"/>
</dbReference>
<dbReference type="AGR" id="WB:WBGene00013405"/>
<dbReference type="CTD" id="173276"/>
<dbReference type="WormBase" id="Y63D3A.4">
    <property type="protein sequence ID" value="CE20335"/>
    <property type="gene ID" value="WBGene00013405"/>
    <property type="gene designation" value="tdpt-1"/>
</dbReference>
<dbReference type="eggNOG" id="KOG2756">
    <property type="taxonomic scope" value="Eukaryota"/>
</dbReference>
<dbReference type="GeneTree" id="ENSGT00390000014242"/>
<dbReference type="HOGENOM" id="CLU_047318_0_0_1"/>
<dbReference type="InParanoid" id="Q9XWG3"/>
<dbReference type="OMA" id="DVWEMCG"/>
<dbReference type="OrthoDB" id="9975959at2759"/>
<dbReference type="PhylomeDB" id="Q9XWG3"/>
<dbReference type="EvolutionaryTrace" id="Q9XWG3"/>
<dbReference type="PRO" id="PR:Q9XWG3"/>
<dbReference type="Proteomes" id="UP000001940">
    <property type="component" value="Chromosome I"/>
</dbReference>
<dbReference type="Bgee" id="WBGene00013405">
    <property type="expression patterns" value="Expressed in germ line (C elegans) and 4 other cell types or tissues"/>
</dbReference>
<dbReference type="GO" id="GO:0005737">
    <property type="term" value="C:cytoplasm"/>
    <property type="evidence" value="ECO:0000318"/>
    <property type="project" value="GO_Central"/>
</dbReference>
<dbReference type="GO" id="GO:0016605">
    <property type="term" value="C:PML body"/>
    <property type="evidence" value="ECO:0000318"/>
    <property type="project" value="GO_Central"/>
</dbReference>
<dbReference type="GO" id="GO:0070260">
    <property type="term" value="F:5'-tyrosyl-DNA phosphodiesterase activity"/>
    <property type="evidence" value="ECO:0000318"/>
    <property type="project" value="GO_Central"/>
</dbReference>
<dbReference type="GO" id="GO:0042802">
    <property type="term" value="F:identical protein binding"/>
    <property type="evidence" value="ECO:0000353"/>
    <property type="project" value="IntAct"/>
</dbReference>
<dbReference type="GO" id="GO:0046872">
    <property type="term" value="F:metal ion binding"/>
    <property type="evidence" value="ECO:0007669"/>
    <property type="project" value="UniProtKB-KW"/>
</dbReference>
<dbReference type="GO" id="GO:0004518">
    <property type="term" value="F:nuclease activity"/>
    <property type="evidence" value="ECO:0007669"/>
    <property type="project" value="UniProtKB-KW"/>
</dbReference>
<dbReference type="GO" id="GO:0003697">
    <property type="term" value="F:single-stranded DNA binding"/>
    <property type="evidence" value="ECO:0000318"/>
    <property type="project" value="GO_Central"/>
</dbReference>
<dbReference type="GO" id="GO:0006302">
    <property type="term" value="P:double-strand break repair"/>
    <property type="evidence" value="ECO:0000318"/>
    <property type="project" value="GO_Central"/>
</dbReference>
<dbReference type="CDD" id="cd09080">
    <property type="entry name" value="TDP2"/>
    <property type="match status" value="1"/>
</dbReference>
<dbReference type="CDD" id="cd14672">
    <property type="entry name" value="UBA_ceTYDP2_like"/>
    <property type="match status" value="1"/>
</dbReference>
<dbReference type="FunFam" id="1.10.8.10:FF:000185">
    <property type="entry name" value="Tdpt-1"/>
    <property type="match status" value="1"/>
</dbReference>
<dbReference type="FunFam" id="3.60.10.10:FF:000150">
    <property type="entry name" value="Tdpt-1"/>
    <property type="match status" value="1"/>
</dbReference>
<dbReference type="Gene3D" id="1.10.8.10">
    <property type="entry name" value="DNA helicase RuvA subunit, C-terminal domain"/>
    <property type="match status" value="1"/>
</dbReference>
<dbReference type="Gene3D" id="3.60.10.10">
    <property type="entry name" value="Endonuclease/exonuclease/phosphatase"/>
    <property type="match status" value="1"/>
</dbReference>
<dbReference type="InterPro" id="IPR036691">
    <property type="entry name" value="Endo/exonu/phosph_ase_sf"/>
</dbReference>
<dbReference type="InterPro" id="IPR005135">
    <property type="entry name" value="Endo/exonuclease/phosphatase"/>
</dbReference>
<dbReference type="InterPro" id="IPR051547">
    <property type="entry name" value="TDP2-like"/>
</dbReference>
<dbReference type="InterPro" id="IPR009060">
    <property type="entry name" value="UBA-like_sf"/>
</dbReference>
<dbReference type="InterPro" id="IPR054109">
    <property type="entry name" value="UBA_8"/>
</dbReference>
<dbReference type="PANTHER" id="PTHR15822">
    <property type="entry name" value="TRAF AND TNF RECEPTOR-ASSOCIATED PROTEIN"/>
    <property type="match status" value="1"/>
</dbReference>
<dbReference type="PANTHER" id="PTHR15822:SF4">
    <property type="entry name" value="TYROSYL-DNA PHOSPHODIESTERASE 2"/>
    <property type="match status" value="1"/>
</dbReference>
<dbReference type="Pfam" id="PF03372">
    <property type="entry name" value="Exo_endo_phos"/>
    <property type="match status" value="1"/>
</dbReference>
<dbReference type="Pfam" id="PF22566">
    <property type="entry name" value="UBA_8"/>
    <property type="match status" value="1"/>
</dbReference>
<dbReference type="SUPFAM" id="SSF56219">
    <property type="entry name" value="DNase I-like"/>
    <property type="match status" value="1"/>
</dbReference>
<dbReference type="SUPFAM" id="SSF46934">
    <property type="entry name" value="UBA-like"/>
    <property type="match status" value="1"/>
</dbReference>
<comment type="function">
    <text evidence="2 5">DNA repair enzyme that can remove a variety of covalent adducts from DNA through hydrolysis of a 5'-phosphodiester bond, giving rise to DNA with a free 5' phosphate. Catalyzes the hydrolysis of dead-end complexes between DNA and the topoisomerase 2 (top2) active site tyrosine residue. Hydrolyzes 5'-phosphoglycolates on protruding 5' ends on DNA double-strand breaks (DSBs) due to DNA damage by radiation and free radicals (By similarity). Inhibits axon regeneration after neuronal injury by promoting the sumoylation of ets-4, thereby inhibiting the phosphorylation of ets-4 required for probable interaction with cebp-1 and activation of svh-2 expression (PubMed:31393064).</text>
</comment>
<comment type="cofactor">
    <cofactor evidence="4">
        <name>Mg(2+)</name>
        <dbReference type="ChEBI" id="CHEBI:18420"/>
    </cofactor>
    <cofactor evidence="2">
        <name>Mn(2+)</name>
        <dbReference type="ChEBI" id="CHEBI:29035"/>
    </cofactor>
    <text evidence="4">Binds 1 magnesium or manganese ion per subunit.</text>
</comment>
<comment type="subunit">
    <text evidence="5">Interacts with mxl-1; the interaction promotes axon regeneration after injury (PubMed:31393064). Interacts with ets-4; the interaction is required for the sumoylation of ets-4 (PubMed:31393064).</text>
</comment>
<comment type="interaction">
    <interactant intactId="EBI-331496">
        <id>Q9XWG3</id>
    </interactant>
    <interactant intactId="EBI-331496">
        <id>Q9XWG3</id>
        <label>Y63D3A.4</label>
    </interactant>
    <organismsDiffer>false</organismsDiffer>
    <experiments>3</experiments>
</comment>
<comment type="subcellular location">
    <subcellularLocation>
        <location evidence="1">Nucleus</location>
    </subcellularLocation>
    <subcellularLocation>
        <location evidence="1">Nucleus</location>
        <location evidence="1">PML body</location>
    </subcellularLocation>
</comment>
<comment type="disruption phenotype">
    <text evidence="5 6">Suppresses axon regeneration defect in mxl-1 background mutant (PubMed:31393064). Suppresses the axon regeneration defect in sdz-33 background mutant (PubMed:33514673).</text>
</comment>
<comment type="similarity">
    <text evidence="7">Belongs to the CCR4/nocturin family. TTRAP/TDP2 subfamily.</text>
</comment>
<protein>
    <recommendedName>
        <fullName>5'-tyrosyl-DNA phosphodiesterase</fullName>
        <shortName>5'-Tyr-DNA phosphodiesterase</shortName>
        <ecNumber>3.1.4.-</ecNumber>
    </recommendedName>
</protein>
<proteinExistence type="evidence at protein level"/>
<accession>Q9XWG3</accession>
<evidence type="ECO:0000250" key="1">
    <source>
        <dbReference type="UniProtKB" id="O95551"/>
    </source>
</evidence>
<evidence type="ECO:0000250" key="2">
    <source>
        <dbReference type="UniProtKB" id="Q9JJX7"/>
    </source>
</evidence>
<evidence type="ECO:0000256" key="3">
    <source>
        <dbReference type="SAM" id="MobiDB-lite"/>
    </source>
</evidence>
<evidence type="ECO:0000269" key="4">
    <source>
    </source>
</evidence>
<evidence type="ECO:0000269" key="5">
    <source>
    </source>
</evidence>
<evidence type="ECO:0000269" key="6">
    <source>
    </source>
</evidence>
<evidence type="ECO:0000305" key="7"/>
<evidence type="ECO:0000312" key="8">
    <source>
        <dbReference type="WormBase" id="Y63D3A.4"/>
    </source>
</evidence>
<evidence type="ECO:0007744" key="9">
    <source>
        <dbReference type="PDB" id="4F1I"/>
    </source>
</evidence>
<evidence type="ECO:0007744" key="10">
    <source>
        <dbReference type="PDB" id="4FVA"/>
    </source>
</evidence>
<evidence type="ECO:0007744" key="11">
    <source>
        <dbReference type="PDB" id="4GEW"/>
    </source>
</evidence>
<evidence type="ECO:0007829" key="12">
    <source>
        <dbReference type="PDB" id="4FVA"/>
    </source>
</evidence>
<evidence type="ECO:0007829" key="13">
    <source>
        <dbReference type="PDB" id="4GEW"/>
    </source>
</evidence>
<feature type="chain" id="PRO_0000390454" description="5'-tyrosyl-DNA phosphodiesterase">
    <location>
        <begin position="1"/>
        <end position="362"/>
    </location>
</feature>
<feature type="region of interest" description="Disordered" evidence="3">
    <location>
        <begin position="1"/>
        <end position="43"/>
    </location>
</feature>
<feature type="region of interest" description="Interaction with 5' end of substrate DNA" evidence="2">
    <location>
        <begin position="126"/>
        <end position="130"/>
    </location>
</feature>
<feature type="region of interest" description="Interaction with 5' end of substrate DNA" evidence="2">
    <location>
        <begin position="232"/>
        <end position="237"/>
    </location>
</feature>
<feature type="region of interest" description="Interaction with 5' end of substrate DNA" evidence="2">
    <location>
        <begin position="273"/>
        <end position="275"/>
    </location>
</feature>
<feature type="compositionally biased region" description="Acidic residues" evidence="3">
    <location>
        <begin position="1"/>
        <end position="10"/>
    </location>
</feature>
<feature type="compositionally biased region" description="Basic and acidic residues" evidence="3">
    <location>
        <begin position="11"/>
        <end position="20"/>
    </location>
</feature>
<feature type="compositionally biased region" description="Acidic residues" evidence="3">
    <location>
        <begin position="21"/>
        <end position="33"/>
    </location>
</feature>
<feature type="active site" description="Proton donor/acceptor" evidence="1">
    <location>
        <position position="271"/>
    </location>
</feature>
<feature type="binding site" evidence="4 10">
    <location>
        <position position="128"/>
    </location>
    <ligand>
        <name>Mg(2+)</name>
        <dbReference type="ChEBI" id="CHEBI:18420"/>
    </ligand>
</feature>
<feature type="binding site" evidence="4 10">
    <location>
        <position position="158"/>
    </location>
    <ligand>
        <name>Mg(2+)</name>
        <dbReference type="ChEBI" id="CHEBI:18420"/>
    </ligand>
</feature>
<feature type="site" description="Interaction with 5' end of substrate DNA" evidence="2">
    <location>
        <position position="185"/>
    </location>
</feature>
<feature type="site" description="Interaction with 5' end of substrate DNA" evidence="2">
    <location>
        <position position="303"/>
    </location>
</feature>
<feature type="site" description="Interaction with 5' end of substrate DNA" evidence="2">
    <location>
        <position position="321"/>
    </location>
</feature>
<feature type="site" description="Interaction with 5' end of substrate DNA" evidence="2">
    <location>
        <position position="353"/>
    </location>
</feature>
<feature type="helix" evidence="13">
    <location>
        <begin position="45"/>
        <end position="56"/>
    </location>
</feature>
<feature type="helix" evidence="13">
    <location>
        <begin position="60"/>
        <end position="66"/>
    </location>
</feature>
<feature type="strand" evidence="13">
    <location>
        <begin position="69"/>
        <end position="72"/>
    </location>
</feature>
<feature type="helix" evidence="13">
    <location>
        <begin position="74"/>
        <end position="83"/>
    </location>
</feature>
<feature type="helix" evidence="13">
    <location>
        <begin position="85"/>
        <end position="87"/>
    </location>
</feature>
<feature type="helix" evidence="13">
    <location>
        <begin position="88"/>
        <end position="95"/>
    </location>
</feature>
<feature type="turn" evidence="13">
    <location>
        <begin position="114"/>
        <end position="117"/>
    </location>
</feature>
<feature type="strand" evidence="12">
    <location>
        <begin position="119"/>
        <end position="126"/>
    </location>
</feature>
<feature type="helix" evidence="12">
    <location>
        <begin position="135"/>
        <end position="149"/>
    </location>
</feature>
<feature type="strand" evidence="12">
    <location>
        <begin position="152"/>
        <end position="159"/>
    </location>
</feature>
<feature type="helix" evidence="12">
    <location>
        <begin position="165"/>
        <end position="168"/>
    </location>
</feature>
<feature type="helix" evidence="12">
    <location>
        <begin position="169"/>
        <end position="172"/>
    </location>
</feature>
<feature type="strand" evidence="12">
    <location>
        <begin position="174"/>
        <end position="180"/>
    </location>
</feature>
<feature type="strand" evidence="12">
    <location>
        <begin position="183"/>
        <end position="192"/>
    </location>
</feature>
<feature type="strand" evidence="12">
    <location>
        <begin position="196"/>
        <end position="204"/>
    </location>
</feature>
<feature type="strand" evidence="12">
    <location>
        <begin position="213"/>
        <end position="221"/>
    </location>
</feature>
<feature type="strand" evidence="12">
    <location>
        <begin position="224"/>
        <end position="232"/>
    </location>
</feature>
<feature type="helix" evidence="12">
    <location>
        <begin position="237"/>
        <end position="239"/>
    </location>
</feature>
<feature type="helix" evidence="12">
    <location>
        <begin position="240"/>
        <end position="260"/>
    </location>
</feature>
<feature type="strand" evidence="12">
    <location>
        <begin position="265"/>
        <end position="271"/>
    </location>
</feature>
<feature type="helix" evidence="12">
    <location>
        <begin position="276"/>
        <end position="278"/>
    </location>
</feature>
<feature type="helix" evidence="12">
    <location>
        <begin position="289"/>
        <end position="292"/>
    </location>
</feature>
<feature type="helix" evidence="12">
    <location>
        <begin position="297"/>
        <end position="299"/>
    </location>
</feature>
<feature type="strand" evidence="12">
    <location>
        <begin position="302"/>
        <end position="304"/>
    </location>
</feature>
<feature type="turn" evidence="12">
    <location>
        <begin position="305"/>
        <end position="307"/>
    </location>
</feature>
<feature type="strand" evidence="12">
    <location>
        <begin position="322"/>
        <end position="329"/>
    </location>
</feature>
<feature type="strand" evidence="12">
    <location>
        <begin position="332"/>
        <end position="338"/>
    </location>
</feature>
<feature type="turn" evidence="12">
    <location>
        <begin position="344"/>
        <end position="346"/>
    </location>
</feature>
<feature type="strand" evidence="12">
    <location>
        <begin position="355"/>
        <end position="361"/>
    </location>
</feature>
<gene>
    <name evidence="8" type="primary">tdpt-1</name>
    <name evidence="8" type="ORF">Y63D3A.4</name>
</gene>
<sequence>MSNSDDEIQEIEAKRQKMSQEDSEVEIEILDEPEQGKLKNSSMSDEQKLHEFAIITATDEAFAQSILQDVDWDLKKALDVFYGSEAFAEARSAAVMGASSSMASSGAAVMTAEDLKGFEVSVMSWNIDGLDGRSLLTRMKAVAHIVKNVNPDILFLQEVVDRDLAPIDKLQSLYKIYYSNKGCQYYTAILVSKMFDVEKHDVIHFQNSGMYRTLQILEGSIGGLKVFLLNTHLESTREHRPQRCAQFGFCMDKVREIIAQNPGALVFFGGDLNLRDEEVSRVPDGVKDAWEAAGSDNKTKFTWDTFKNDNKQGFHGAKMRFDRLYWSGPLDKVKFTLEGRQRIRSCLCFPSDHWAINATFFA</sequence>
<name>TYDP2_CAEEL</name>
<reference key="1">
    <citation type="journal article" date="1998" name="Science">
        <title>Genome sequence of the nematode C. elegans: a platform for investigating biology.</title>
        <authorList>
            <consortium name="The C. elegans sequencing consortium"/>
        </authorList>
    </citation>
    <scope>NUCLEOTIDE SEQUENCE [LARGE SCALE GENOMIC DNA]</scope>
    <source>
        <strain>Bristol N2</strain>
    </source>
</reference>
<reference evidence="7" key="2">
    <citation type="journal article" date="2019" name="EMBO Rep.">
        <title>TDP2 negatively regulates axon regeneration by inducing SUMOylation of an Ets transcription factor.</title>
        <authorList>
            <person name="Sakai Y."/>
            <person name="Hanafusa H."/>
            <person name="Pastuhov S.I."/>
            <person name="Shimizu T."/>
            <person name="Li C."/>
            <person name="Hisamoto N."/>
            <person name="Matsumoto K."/>
        </authorList>
    </citation>
    <scope>FUNCTION</scope>
    <scope>INTERACTION WITH MXL-1 AND ETS-4</scope>
    <scope>DISRUPTION PHENOTYPE</scope>
</reference>
<reference evidence="7" key="3">
    <citation type="journal article" date="2021" name="J. Neurosci.">
        <title>Caenorhabditis elegans F-Box Protein Promotes Axon Regeneration by Inducing Degradation of the Mad Transcription Factor.</title>
        <authorList>
            <person name="Shimizu T."/>
            <person name="Pastuhov S.I."/>
            <person name="Hanafusa H."/>
            <person name="Sakai Y."/>
            <person name="Todoroki Y."/>
            <person name="Hisamoto N."/>
            <person name="Matsumoto K."/>
        </authorList>
    </citation>
    <scope>DISRUPTION PHENOTYPE</scope>
</reference>
<reference evidence="9 10 11" key="4">
    <citation type="journal article" date="2012" name="Nat. Struct. Mol. Biol.">
        <title>Structural basis for recognition of 5'-phosphotyrosine adducts by Tdp2.</title>
        <authorList>
            <person name="Shi K."/>
            <person name="Kurahashi K."/>
            <person name="Gao R."/>
            <person name="Tsutakawa S.E."/>
            <person name="Tainer J.A."/>
            <person name="Pommier Y."/>
            <person name="Aihara H."/>
        </authorList>
    </citation>
    <scope>X-RAY CRYSTALLOGRAPHY (2.07 ANGSTROMS) OF 107-362 IN COMPLEX WITH MAGNESIUM</scope>
    <scope>COFACTOR</scope>
</reference>
<keyword id="KW-0002">3D-structure</keyword>
<keyword id="KW-0227">DNA damage</keyword>
<keyword id="KW-0234">DNA repair</keyword>
<keyword id="KW-0378">Hydrolase</keyword>
<keyword id="KW-0460">Magnesium</keyword>
<keyword id="KW-0479">Metal-binding</keyword>
<keyword id="KW-0540">Nuclease</keyword>
<keyword id="KW-0539">Nucleus</keyword>
<keyword id="KW-1185">Reference proteome</keyword>
<organism>
    <name type="scientific">Caenorhabditis elegans</name>
    <dbReference type="NCBI Taxonomy" id="6239"/>
    <lineage>
        <taxon>Eukaryota</taxon>
        <taxon>Metazoa</taxon>
        <taxon>Ecdysozoa</taxon>
        <taxon>Nematoda</taxon>
        <taxon>Chromadorea</taxon>
        <taxon>Rhabditida</taxon>
        <taxon>Rhabditina</taxon>
        <taxon>Rhabditomorpha</taxon>
        <taxon>Rhabditoidea</taxon>
        <taxon>Rhabditidae</taxon>
        <taxon>Peloderinae</taxon>
        <taxon>Caenorhabditis</taxon>
    </lineage>
</organism>